<feature type="signal peptide" evidence="2">
    <location>
        <begin position="1"/>
        <end position="18"/>
    </location>
</feature>
<feature type="chain" id="PRO_0000452452" description="Apolipoprotein E">
    <location>
        <begin position="19"/>
        <end position="310"/>
    </location>
</feature>
<feature type="repeat" description="1">
    <location>
        <begin position="77"/>
        <end position="98"/>
    </location>
</feature>
<feature type="repeat" description="2">
    <location>
        <begin position="99"/>
        <end position="120"/>
    </location>
</feature>
<feature type="repeat" description="3">
    <location>
        <begin position="121"/>
        <end position="142"/>
    </location>
</feature>
<feature type="repeat" description="4">
    <location>
        <begin position="143"/>
        <end position="164"/>
    </location>
</feature>
<feature type="repeat" description="5">
    <location>
        <begin position="165"/>
        <end position="186"/>
    </location>
</feature>
<feature type="repeat" description="6">
    <location>
        <begin position="187"/>
        <end position="208"/>
    </location>
</feature>
<feature type="repeat" description="7">
    <location>
        <begin position="209"/>
        <end position="226"/>
    </location>
</feature>
<feature type="repeat" description="8">
    <location>
        <begin position="227"/>
        <end position="248"/>
    </location>
</feature>
<feature type="region of interest" description="8 X 22 AA approximate tandem repeats">
    <location>
        <begin position="77"/>
        <end position="248"/>
    </location>
</feature>
<feature type="region of interest" description="LDL and other lipoprotein receptors binding" evidence="1">
    <location>
        <begin position="155"/>
        <end position="165"/>
    </location>
</feature>
<feature type="region of interest" description="Lipid-binding and lipoprotein association" evidence="1">
    <location>
        <begin position="207"/>
        <end position="283"/>
    </location>
</feature>
<feature type="region of interest" description="Homooligomerization" evidence="1">
    <location>
        <begin position="259"/>
        <end position="310"/>
    </location>
</feature>
<feature type="region of interest" description="Specificity for association with VLDL" evidence="1">
    <location>
        <begin position="271"/>
        <end position="283"/>
    </location>
</feature>
<feature type="binding site" evidence="1">
    <location>
        <begin position="159"/>
        <end position="162"/>
    </location>
    <ligand>
        <name>heparin</name>
        <dbReference type="ChEBI" id="CHEBI:28304"/>
    </ligand>
</feature>
<feature type="binding site" evidence="1">
    <location>
        <begin position="222"/>
        <end position="229"/>
    </location>
    <ligand>
        <name>heparin</name>
        <dbReference type="ChEBI" id="CHEBI:28304"/>
    </ligand>
</feature>
<proteinExistence type="inferred from homology"/>
<protein>
    <recommendedName>
        <fullName>Apolipoprotein E</fullName>
        <shortName>Apo-E</shortName>
    </recommendedName>
</protein>
<name>APOE_DICSS</name>
<comment type="function">
    <text evidence="1">APOE is an apolipoprotein, a protein associating with lipid particles, that mainly functions in lipoprotein-mediated lipid transport between organs via the plasma and interstitial fluids. APOE is a core component of plasma lipoproteins and is involved in their production, conversion and clearance. Apolipoproteins are amphipathic molecules that interact both with lipids of the lipoprotein particle core and the aqueous environment of the plasma. As such, APOE associates with chylomicrons, chylomicron remnants, very low density lipoproteins (VLDL) and intermediate density lipoproteins (IDL) but shows a preferential binding to high-density lipoproteins (HDL). It also binds a wide range of cellular receptors including the LDL receptor/LDLR and the very low-density lipoprotein receptor/VLDLR that mediate the cellular uptake of the APOE-containing lipoprotein particles. Finally, APOE also has a heparin-binding activity and binds heparan-sulfate proteoglycans on the surface of cells, a property that supports the capture and the receptor-mediated uptake of APOE-containing lipoproteins by cells.</text>
</comment>
<comment type="subunit">
    <text evidence="1">Homotetramer. May interact with ABCA1; functionally associated with ABCA1 in the biogenesis of HDLs. May interact with APP/A4 amyloid-beta peptide; the interaction is extremely stable in vitro but its physiological significance is unclear. May interact with MAPT. May interact with MAP2. In the cerebrospinal fluid, interacts with secreted SORL1. Interacts with PMEL; this allows the loading of PMEL luminal fragment on ILVs to induce fibril nucleation.</text>
</comment>
<comment type="subcellular location">
    <subcellularLocation>
        <location evidence="1">Secreted</location>
    </subcellularLocation>
    <subcellularLocation>
        <location evidence="1">Secreted</location>
        <location evidence="1">Extracellular space</location>
    </subcellularLocation>
    <subcellularLocation>
        <location evidence="1">Secreted</location>
        <location evidence="1">Extracellular space</location>
        <location evidence="1">Extracellular matrix</location>
    </subcellularLocation>
    <subcellularLocation>
        <location evidence="1">Extracellular vesicle</location>
    </subcellularLocation>
    <subcellularLocation>
        <location evidence="1">Endosome</location>
        <location evidence="1">Multivesicular body</location>
    </subcellularLocation>
    <text evidence="1">In the plasma, APOE is associated with chylomicrons, chylomicrons remnants, VLDL, LDL and HDL lipoproteins. Lipid poor oligomeric APOE is associated with the extracellular matrix in a calcium- and heparan-sulfate proteoglycans-dependent manner. Lipidation induces the release from the extracellular matrix. Colocalizes with CD63 and PMEL at exosomes and in intraluminal vesicles within multivesicular endosomes.</text>
</comment>
<comment type="PTM">
    <text evidence="1">APOE exists as multiple glycosylated and sialylated glycoforms within cells and in plasma. The extent of glycosylation and sialylation are tissue and context specific.</text>
</comment>
<comment type="PTM">
    <text evidence="1">Glycated in plasma VLDL.</text>
</comment>
<comment type="PTM">
    <text evidence="1">Phosphorylated by FAM20C in the extracellular medium.</text>
</comment>
<comment type="similarity">
    <text evidence="3">Belongs to the apolipoprotein A1/A4/E family.</text>
</comment>
<organism>
    <name type="scientific">Dicerorhinus sumatrensis sumatrensis</name>
    <name type="common">Western Sumatran rhinoceros</name>
    <dbReference type="NCBI Taxonomy" id="310712"/>
    <lineage>
        <taxon>Eukaryota</taxon>
        <taxon>Metazoa</taxon>
        <taxon>Chordata</taxon>
        <taxon>Craniata</taxon>
        <taxon>Vertebrata</taxon>
        <taxon>Euteleostomi</taxon>
        <taxon>Mammalia</taxon>
        <taxon>Eutheria</taxon>
        <taxon>Laurasiatheria</taxon>
        <taxon>Perissodactyla</taxon>
        <taxon>Rhinocerotidae</taxon>
        <taxon>Dicerorhinus</taxon>
    </lineage>
</organism>
<gene>
    <name type="primary">APOE</name>
</gene>
<keyword id="KW-0162">Chylomicron</keyword>
<keyword id="KW-0967">Endosome</keyword>
<keyword id="KW-0272">Extracellular matrix</keyword>
<keyword id="KW-0325">Glycoprotein</keyword>
<keyword id="KW-0345">HDL</keyword>
<keyword id="KW-0358">Heparin-binding</keyword>
<keyword id="KW-0445">Lipid transport</keyword>
<keyword id="KW-0446">Lipid-binding</keyword>
<keyword id="KW-0558">Oxidation</keyword>
<keyword id="KW-0597">Phosphoprotein</keyword>
<keyword id="KW-0677">Repeat</keyword>
<keyword id="KW-0964">Secreted</keyword>
<keyword id="KW-0732">Signal</keyword>
<keyword id="KW-0813">Transport</keyword>
<keyword id="KW-0850">VLDL</keyword>
<evidence type="ECO:0000250" key="1">
    <source>
        <dbReference type="UniProtKB" id="P02649"/>
    </source>
</evidence>
<evidence type="ECO:0000255" key="2"/>
<evidence type="ECO:0000305" key="3"/>
<dbReference type="EMBL" id="PEKH011059302">
    <property type="status" value="NOT_ANNOTATED_CDS"/>
    <property type="molecule type" value="Genomic_DNA"/>
</dbReference>
<dbReference type="SMR" id="P0DUI7"/>
<dbReference type="GO" id="GO:0042627">
    <property type="term" value="C:chylomicron"/>
    <property type="evidence" value="ECO:0007669"/>
    <property type="project" value="UniProtKB-KW"/>
</dbReference>
<dbReference type="GO" id="GO:0070062">
    <property type="term" value="C:extracellular exosome"/>
    <property type="evidence" value="ECO:0000250"/>
    <property type="project" value="UniProtKB"/>
</dbReference>
<dbReference type="GO" id="GO:0034364">
    <property type="term" value="C:high-density lipoprotein particle"/>
    <property type="evidence" value="ECO:0007669"/>
    <property type="project" value="UniProtKB-KW"/>
</dbReference>
<dbReference type="GO" id="GO:0034362">
    <property type="term" value="C:low-density lipoprotein particle"/>
    <property type="evidence" value="ECO:0007669"/>
    <property type="project" value="TreeGrafter"/>
</dbReference>
<dbReference type="GO" id="GO:0097487">
    <property type="term" value="C:multivesicular body, internal vesicle"/>
    <property type="evidence" value="ECO:0000250"/>
    <property type="project" value="UniProtKB"/>
</dbReference>
<dbReference type="GO" id="GO:0034361">
    <property type="term" value="C:very-low-density lipoprotein particle"/>
    <property type="evidence" value="ECO:0007669"/>
    <property type="project" value="UniProtKB-KW"/>
</dbReference>
<dbReference type="GO" id="GO:0120020">
    <property type="term" value="F:cholesterol transfer activity"/>
    <property type="evidence" value="ECO:0007669"/>
    <property type="project" value="TreeGrafter"/>
</dbReference>
<dbReference type="GO" id="GO:0008201">
    <property type="term" value="F:heparin binding"/>
    <property type="evidence" value="ECO:0007669"/>
    <property type="project" value="UniProtKB-KW"/>
</dbReference>
<dbReference type="GO" id="GO:0060228">
    <property type="term" value="F:phosphatidylcholine-sterol O-acyltransferase activator activity"/>
    <property type="evidence" value="ECO:0007669"/>
    <property type="project" value="TreeGrafter"/>
</dbReference>
<dbReference type="GO" id="GO:0005543">
    <property type="term" value="F:phospholipid binding"/>
    <property type="evidence" value="ECO:0007669"/>
    <property type="project" value="TreeGrafter"/>
</dbReference>
<dbReference type="GO" id="GO:0055090">
    <property type="term" value="P:acylglycerol homeostasis"/>
    <property type="evidence" value="ECO:0007669"/>
    <property type="project" value="TreeGrafter"/>
</dbReference>
<dbReference type="GO" id="GO:0033344">
    <property type="term" value="P:cholesterol efflux"/>
    <property type="evidence" value="ECO:0007669"/>
    <property type="project" value="TreeGrafter"/>
</dbReference>
<dbReference type="GO" id="GO:0008203">
    <property type="term" value="P:cholesterol metabolic process"/>
    <property type="evidence" value="ECO:0007669"/>
    <property type="project" value="TreeGrafter"/>
</dbReference>
<dbReference type="GO" id="GO:0042157">
    <property type="term" value="P:lipoprotein metabolic process"/>
    <property type="evidence" value="ECO:0007669"/>
    <property type="project" value="InterPro"/>
</dbReference>
<dbReference type="GO" id="GO:0032438">
    <property type="term" value="P:melanosome organization"/>
    <property type="evidence" value="ECO:0000250"/>
    <property type="project" value="UniProtKB"/>
</dbReference>
<dbReference type="GO" id="GO:0033700">
    <property type="term" value="P:phospholipid efflux"/>
    <property type="evidence" value="ECO:0007669"/>
    <property type="project" value="TreeGrafter"/>
</dbReference>
<dbReference type="FunFam" id="1.20.120.20:FF:000002">
    <property type="entry name" value="Apolipoprotein E"/>
    <property type="match status" value="1"/>
</dbReference>
<dbReference type="FunFam" id="1.20.120.20:FF:000003">
    <property type="entry name" value="Apolipoprotein E"/>
    <property type="match status" value="1"/>
</dbReference>
<dbReference type="Gene3D" id="1.20.120.20">
    <property type="entry name" value="Apolipoprotein"/>
    <property type="match status" value="2"/>
</dbReference>
<dbReference type="InterPro" id="IPR000074">
    <property type="entry name" value="ApoA_E"/>
</dbReference>
<dbReference type="InterPro" id="IPR050163">
    <property type="entry name" value="Apolipoprotein_A1/A4/E"/>
</dbReference>
<dbReference type="PANTHER" id="PTHR18976">
    <property type="entry name" value="APOLIPOPROTEIN"/>
    <property type="match status" value="1"/>
</dbReference>
<dbReference type="PANTHER" id="PTHR18976:SF2">
    <property type="entry name" value="APOLIPOPROTEIN E"/>
    <property type="match status" value="1"/>
</dbReference>
<dbReference type="Pfam" id="PF01442">
    <property type="entry name" value="Apolipoprotein"/>
    <property type="match status" value="1"/>
</dbReference>
<dbReference type="SUPFAM" id="SSF58113">
    <property type="entry name" value="Apolipoprotein A-I"/>
    <property type="match status" value="1"/>
</dbReference>
<sequence>MKVLWPALVVTLLAGCRADVEPGPEVQLGKEWATWQASQPWEQALGRFWNYLRWVQTLSEQVQEELLSSQVTEELTALMDDTMKEVKACKSELEEQLGPVAEETKARVSKELQAAQARLGADMEEVRNRLAQYRGELQAMVGQSTEELRGRLNAHLRKLRKRLLRDAEDLQQRLAVYQAGIREGAERSVNTLREHLGPLAEQAATMHTLVSKPLQERAEAWAQRLRGRLEKAGFPVGDRLDEVREQVQEVRAKVEEQANQVRLQAEAFQGRLKSWFEPLVQDMQQKWAELVEKVQLALRAVPTSVPSEKQ</sequence>
<reference key="1">
    <citation type="journal article" date="2018" name="Curr. Biol.">
        <title>Genomic Analysis of Demographic History and Ecological Niche Modeling in the Endangered Sumatran Rhinoceros Dicerorhinus sumatrensis.</title>
        <authorList>
            <person name="Mays H.L. Jr."/>
            <person name="Hung C.M."/>
            <person name="Shaner P.J."/>
            <person name="Denvir J."/>
            <person name="Justice M."/>
            <person name="Yang S.F."/>
            <person name="Roth T.L."/>
            <person name="Oehler D.A."/>
            <person name="Fan J."/>
            <person name="Rekulapally S."/>
            <person name="Primerano D.A."/>
        </authorList>
    </citation>
    <scope>NUCLEOTIDE SEQUENCE [LARGE SCALE GENOMIC DNA]</scope>
</reference>
<reference key="2">
    <citation type="unpublished observations" date="2021-01">
        <authorList>
            <person name="Puppione D.L."/>
        </authorList>
    </citation>
    <scope>IDENTIFICATION</scope>
</reference>
<accession>P0DUI7</accession>